<gene>
    <name type="primary">mtmB2</name>
    <name type="ordered locus">MA_2972</name>
</gene>
<name>MTMB2_METAC</name>
<accession>P58866</accession>
<dbReference type="EC" id="2.1.1.248"/>
<dbReference type="EMBL" id="AE010299">
    <property type="protein sequence ID" value="AAM06345.1"/>
    <property type="molecule type" value="Genomic_DNA"/>
</dbReference>
<dbReference type="STRING" id="188937.MA_2972"/>
<dbReference type="KEGG" id="mac:MA_2972"/>
<dbReference type="HOGENOM" id="CLU_047925_0_0_2"/>
<dbReference type="InParanoid" id="P58866"/>
<dbReference type="UniPathway" id="UPA00643"/>
<dbReference type="Proteomes" id="UP000002487">
    <property type="component" value="Chromosome"/>
</dbReference>
<dbReference type="GO" id="GO:0043852">
    <property type="term" value="F:monomethylamine methyltransferase activity"/>
    <property type="evidence" value="ECO:0007669"/>
    <property type="project" value="UniProtKB-EC"/>
</dbReference>
<dbReference type="GO" id="GO:0015948">
    <property type="term" value="P:methanogenesis"/>
    <property type="evidence" value="ECO:0007669"/>
    <property type="project" value="UniProtKB-KW"/>
</dbReference>
<dbReference type="GO" id="GO:0032259">
    <property type="term" value="P:methylation"/>
    <property type="evidence" value="ECO:0007669"/>
    <property type="project" value="UniProtKB-KW"/>
</dbReference>
<dbReference type="FunFam" id="3.20.20.460:FF:000001">
    <property type="entry name" value="Monomethylamine methyltransferase MtmB1"/>
    <property type="match status" value="1"/>
</dbReference>
<dbReference type="Gene3D" id="3.20.20.460">
    <property type="entry name" value="Monomethylamine methyltransferase MtmB"/>
    <property type="match status" value="1"/>
</dbReference>
<dbReference type="InterPro" id="IPR008031">
    <property type="entry name" value="MtmB_MeTrfase"/>
</dbReference>
<dbReference type="InterPro" id="IPR036655">
    <property type="entry name" value="MtmB_sf"/>
</dbReference>
<dbReference type="Pfam" id="PF05369">
    <property type="entry name" value="MtmB"/>
    <property type="match status" value="1"/>
</dbReference>
<dbReference type="SUPFAM" id="SSF75098">
    <property type="entry name" value="Monomethylamine methyltransferase MtmB"/>
    <property type="match status" value="1"/>
</dbReference>
<proteinExistence type="inferred from homology"/>
<organism>
    <name type="scientific">Methanosarcina acetivorans (strain ATCC 35395 / DSM 2834 / JCM 12185 / C2A)</name>
    <dbReference type="NCBI Taxonomy" id="188937"/>
    <lineage>
        <taxon>Archaea</taxon>
        <taxon>Methanobacteriati</taxon>
        <taxon>Methanobacteriota</taxon>
        <taxon>Stenosarchaea group</taxon>
        <taxon>Methanomicrobia</taxon>
        <taxon>Methanosarcinales</taxon>
        <taxon>Methanosarcinaceae</taxon>
        <taxon>Methanosarcina</taxon>
    </lineage>
</organism>
<feature type="initiator methionine" description="Removed" evidence="1">
    <location>
        <position position="1"/>
    </location>
</feature>
<feature type="chain" id="PRO_0000216556" description="Monomethylamine methyltransferase MtmB2">
    <location>
        <begin position="2"/>
        <end position="458"/>
    </location>
</feature>
<feature type="non-standard amino acid" description="Pyrrolysine" evidence="1">
    <location>
        <position position="202"/>
    </location>
</feature>
<comment type="function">
    <text evidence="1">Catalyzes the transfer of the methyl group from monomethylamine to the corrinoid cofactor of MtmC.</text>
</comment>
<comment type="catalytic activity">
    <reaction>
        <text>Co(I)-[methylamine-specific corrinoid protein] + methylamine + H(+) = methyl-Co(III)-[methylamine-specific corrinoid protein] + NH4(+)</text>
        <dbReference type="Rhea" id="RHEA:26059"/>
        <dbReference type="Rhea" id="RHEA-COMP:11120"/>
        <dbReference type="Rhea" id="RHEA-COMP:11121"/>
        <dbReference type="ChEBI" id="CHEBI:15378"/>
        <dbReference type="ChEBI" id="CHEBI:28938"/>
        <dbReference type="ChEBI" id="CHEBI:59338"/>
        <dbReference type="ChEBI" id="CHEBI:85033"/>
        <dbReference type="ChEBI" id="CHEBI:85035"/>
        <dbReference type="EC" id="2.1.1.248"/>
    </reaction>
</comment>
<comment type="pathway">
    <text>One-carbon metabolism; methanogenesis from methylamine.</text>
</comment>
<comment type="subunit">
    <text evidence="1">Can form a complex with MtmC.</text>
</comment>
<comment type="similarity">
    <text evidence="2">Belongs to the monomethylamine methyltransferase family.</text>
</comment>
<reference key="1">
    <citation type="journal article" date="2002" name="Genome Res.">
        <title>The genome of Methanosarcina acetivorans reveals extensive metabolic and physiological diversity.</title>
        <authorList>
            <person name="Galagan J.E."/>
            <person name="Nusbaum C."/>
            <person name="Roy A."/>
            <person name="Endrizzi M.G."/>
            <person name="Macdonald P."/>
            <person name="FitzHugh W."/>
            <person name="Calvo S."/>
            <person name="Engels R."/>
            <person name="Smirnov S."/>
            <person name="Atnoor D."/>
            <person name="Brown A."/>
            <person name="Allen N."/>
            <person name="Naylor J."/>
            <person name="Stange-Thomann N."/>
            <person name="DeArellano K."/>
            <person name="Johnson R."/>
            <person name="Linton L."/>
            <person name="McEwan P."/>
            <person name="McKernan K."/>
            <person name="Talamas J."/>
            <person name="Tirrell A."/>
            <person name="Ye W."/>
            <person name="Zimmer A."/>
            <person name="Barber R.D."/>
            <person name="Cann I."/>
            <person name="Graham D.E."/>
            <person name="Grahame D.A."/>
            <person name="Guss A.M."/>
            <person name="Hedderich R."/>
            <person name="Ingram-Smith C."/>
            <person name="Kuettner H.C."/>
            <person name="Krzycki J.A."/>
            <person name="Leigh J.A."/>
            <person name="Li W."/>
            <person name="Liu J."/>
            <person name="Mukhopadhyay B."/>
            <person name="Reeve J.N."/>
            <person name="Smith K."/>
            <person name="Springer T.A."/>
            <person name="Umayam L.A."/>
            <person name="White O."/>
            <person name="White R.H."/>
            <person name="de Macario E.C."/>
            <person name="Ferry J.G."/>
            <person name="Jarrell K.F."/>
            <person name="Jing H."/>
            <person name="Macario A.J.L."/>
            <person name="Paulsen I.T."/>
            <person name="Pritchett M."/>
            <person name="Sowers K.R."/>
            <person name="Swanson R.V."/>
            <person name="Zinder S.H."/>
            <person name="Lander E."/>
            <person name="Metcalf W.W."/>
            <person name="Birren B."/>
        </authorList>
    </citation>
    <scope>NUCLEOTIDE SEQUENCE [LARGE SCALE GENOMIC DNA]</scope>
    <source>
        <strain>ATCC 35395 / DSM 2834 / JCM 12185 / C2A</strain>
    </source>
</reference>
<keyword id="KW-0484">Methanogenesis</keyword>
<keyword id="KW-0489">Methyltransferase</keyword>
<keyword id="KW-0669">Pyrrolysine</keyword>
<keyword id="KW-1185">Reference proteome</keyword>
<keyword id="KW-0808">Transferase</keyword>
<evidence type="ECO:0000250" key="1"/>
<evidence type="ECO:0000305" key="2"/>
<sequence>MTFKKSFDCYDFYDRAKVGEKCTQDDWDLMKIPMKAMELKQKYGLDFKGEFVPTDRDMMEKLFQAGFEMLLECGIYCTDTHRIVKYTEDEIWDAINNVQKEFTLGTGRDAVNVRKRSVGDKRKPIVQGGPTGSPISEDVFMPVHMSYALEKEVDTIVNGVMTSVRGKPPVPKSPYEVLAAKTETRLIKQACAMAGRPGMAVOGPETSLSAQGNISADCAGGMQSTDSHEVSQLNELKIDLDAIAVIAHYNANSDIIMDEQMPIFGGYAGGIEETTIVDVATHINAFVMSNASWHLDGPVHIRWGSTNTRETLTIAGWACATISEFTDMLSGNQYYPCAGPGTEMCLLEASAQSITDTASGREILSGVASAKGVVTDKTTGMEARMMGEVARATAGAEITEINKILDKLVALYEKNYASAPAGKTFQECYDVKTVTPTEEYMQIYDGARKKLEELGLVF</sequence>
<protein>
    <recommendedName>
        <fullName>Monomethylamine methyltransferase MtmB2</fullName>
        <shortName>MMA methyltransferase 2</shortName>
        <shortName>MMAMT 2</shortName>
        <ecNumber>2.1.1.248</ecNumber>
    </recommendedName>
</protein>